<reference key="1">
    <citation type="journal article" date="1999" name="Nature">
        <title>Sequence and analysis of chromosome 4 of the plant Arabidopsis thaliana.</title>
        <authorList>
            <person name="Mayer K.F.X."/>
            <person name="Schueller C."/>
            <person name="Wambutt R."/>
            <person name="Murphy G."/>
            <person name="Volckaert G."/>
            <person name="Pohl T."/>
            <person name="Duesterhoeft A."/>
            <person name="Stiekema W."/>
            <person name="Entian K.-D."/>
            <person name="Terryn N."/>
            <person name="Harris B."/>
            <person name="Ansorge W."/>
            <person name="Brandt P."/>
            <person name="Grivell L.A."/>
            <person name="Rieger M."/>
            <person name="Weichselgartner M."/>
            <person name="de Simone V."/>
            <person name="Obermaier B."/>
            <person name="Mache R."/>
            <person name="Mueller M."/>
            <person name="Kreis M."/>
            <person name="Delseny M."/>
            <person name="Puigdomenech P."/>
            <person name="Watson M."/>
            <person name="Schmidtheini T."/>
            <person name="Reichert B."/>
            <person name="Portetelle D."/>
            <person name="Perez-Alonso M."/>
            <person name="Boutry M."/>
            <person name="Bancroft I."/>
            <person name="Vos P."/>
            <person name="Hoheisel J."/>
            <person name="Zimmermann W."/>
            <person name="Wedler H."/>
            <person name="Ridley P."/>
            <person name="Langham S.-A."/>
            <person name="McCullagh B."/>
            <person name="Bilham L."/>
            <person name="Robben J."/>
            <person name="van der Schueren J."/>
            <person name="Grymonprez B."/>
            <person name="Chuang Y.-J."/>
            <person name="Vandenbussche F."/>
            <person name="Braeken M."/>
            <person name="Weltjens I."/>
            <person name="Voet M."/>
            <person name="Bastiaens I."/>
            <person name="Aert R."/>
            <person name="Defoor E."/>
            <person name="Weitzenegger T."/>
            <person name="Bothe G."/>
            <person name="Ramsperger U."/>
            <person name="Hilbert H."/>
            <person name="Braun M."/>
            <person name="Holzer E."/>
            <person name="Brandt A."/>
            <person name="Peters S."/>
            <person name="van Staveren M."/>
            <person name="Dirkse W."/>
            <person name="Mooijman P."/>
            <person name="Klein Lankhorst R."/>
            <person name="Rose M."/>
            <person name="Hauf J."/>
            <person name="Koetter P."/>
            <person name="Berneiser S."/>
            <person name="Hempel S."/>
            <person name="Feldpausch M."/>
            <person name="Lamberth S."/>
            <person name="Van den Daele H."/>
            <person name="De Keyser A."/>
            <person name="Buysshaert C."/>
            <person name="Gielen J."/>
            <person name="Villarroel R."/>
            <person name="De Clercq R."/>
            <person name="van Montagu M."/>
            <person name="Rogers J."/>
            <person name="Cronin A."/>
            <person name="Quail M.A."/>
            <person name="Bray-Allen S."/>
            <person name="Clark L."/>
            <person name="Doggett J."/>
            <person name="Hall S."/>
            <person name="Kay M."/>
            <person name="Lennard N."/>
            <person name="McLay K."/>
            <person name="Mayes R."/>
            <person name="Pettett A."/>
            <person name="Rajandream M.A."/>
            <person name="Lyne M."/>
            <person name="Benes V."/>
            <person name="Rechmann S."/>
            <person name="Borkova D."/>
            <person name="Bloecker H."/>
            <person name="Scharfe M."/>
            <person name="Grimm M."/>
            <person name="Loehnert T.-H."/>
            <person name="Dose S."/>
            <person name="de Haan M."/>
            <person name="Maarse A.C."/>
            <person name="Schaefer M."/>
            <person name="Mueller-Auer S."/>
            <person name="Gabel C."/>
            <person name="Fuchs M."/>
            <person name="Fartmann B."/>
            <person name="Granderath K."/>
            <person name="Dauner D."/>
            <person name="Herzl A."/>
            <person name="Neumann S."/>
            <person name="Argiriou A."/>
            <person name="Vitale D."/>
            <person name="Liguori R."/>
            <person name="Piravandi E."/>
            <person name="Massenet O."/>
            <person name="Quigley F."/>
            <person name="Clabauld G."/>
            <person name="Muendlein A."/>
            <person name="Felber R."/>
            <person name="Schnabl S."/>
            <person name="Hiller R."/>
            <person name="Schmidt W."/>
            <person name="Lecharny A."/>
            <person name="Aubourg S."/>
            <person name="Chefdor F."/>
            <person name="Cooke R."/>
            <person name="Berger C."/>
            <person name="Monfort A."/>
            <person name="Casacuberta E."/>
            <person name="Gibbons T."/>
            <person name="Weber N."/>
            <person name="Vandenbol M."/>
            <person name="Bargues M."/>
            <person name="Terol J."/>
            <person name="Torres A."/>
            <person name="Perez-Perez A."/>
            <person name="Purnelle B."/>
            <person name="Bent E."/>
            <person name="Johnson S."/>
            <person name="Tacon D."/>
            <person name="Jesse T."/>
            <person name="Heijnen L."/>
            <person name="Schwarz S."/>
            <person name="Scholler P."/>
            <person name="Heber S."/>
            <person name="Francs P."/>
            <person name="Bielke C."/>
            <person name="Frishman D."/>
            <person name="Haase D."/>
            <person name="Lemcke K."/>
            <person name="Mewes H.-W."/>
            <person name="Stocker S."/>
            <person name="Zaccaria P."/>
            <person name="Bevan M."/>
            <person name="Wilson R.K."/>
            <person name="de la Bastide M."/>
            <person name="Habermann K."/>
            <person name="Parnell L."/>
            <person name="Dedhia N."/>
            <person name="Gnoj L."/>
            <person name="Schutz K."/>
            <person name="Huang E."/>
            <person name="Spiegel L."/>
            <person name="Sekhon M."/>
            <person name="Murray J."/>
            <person name="Sheet P."/>
            <person name="Cordes M."/>
            <person name="Abu-Threideh J."/>
            <person name="Stoneking T."/>
            <person name="Kalicki J."/>
            <person name="Graves T."/>
            <person name="Harmon G."/>
            <person name="Edwards J."/>
            <person name="Latreille P."/>
            <person name="Courtney L."/>
            <person name="Cloud J."/>
            <person name="Abbott A."/>
            <person name="Scott K."/>
            <person name="Johnson D."/>
            <person name="Minx P."/>
            <person name="Bentley D."/>
            <person name="Fulton B."/>
            <person name="Miller N."/>
            <person name="Greco T."/>
            <person name="Kemp K."/>
            <person name="Kramer J."/>
            <person name="Fulton L."/>
            <person name="Mardis E."/>
            <person name="Dante M."/>
            <person name="Pepin K."/>
            <person name="Hillier L.W."/>
            <person name="Nelson J."/>
            <person name="Spieth J."/>
            <person name="Ryan E."/>
            <person name="Andrews S."/>
            <person name="Geisel C."/>
            <person name="Layman D."/>
            <person name="Du H."/>
            <person name="Ali J."/>
            <person name="Berghoff A."/>
            <person name="Jones K."/>
            <person name="Drone K."/>
            <person name="Cotton M."/>
            <person name="Joshu C."/>
            <person name="Antonoiu B."/>
            <person name="Zidanic M."/>
            <person name="Strong C."/>
            <person name="Sun H."/>
            <person name="Lamar B."/>
            <person name="Yordan C."/>
            <person name="Ma P."/>
            <person name="Zhong J."/>
            <person name="Preston R."/>
            <person name="Vil D."/>
            <person name="Shekher M."/>
            <person name="Matero A."/>
            <person name="Shah R."/>
            <person name="Swaby I.K."/>
            <person name="O'Shaughnessy A."/>
            <person name="Rodriguez M."/>
            <person name="Hoffman J."/>
            <person name="Till S."/>
            <person name="Granat S."/>
            <person name="Shohdy N."/>
            <person name="Hasegawa A."/>
            <person name="Hameed A."/>
            <person name="Lodhi M."/>
            <person name="Johnson A."/>
            <person name="Chen E."/>
            <person name="Marra M.A."/>
            <person name="Martienssen R."/>
            <person name="McCombie W.R."/>
        </authorList>
    </citation>
    <scope>NUCLEOTIDE SEQUENCE [LARGE SCALE GENOMIC DNA]</scope>
    <source>
        <strain>cv. Columbia</strain>
    </source>
</reference>
<reference key="2">
    <citation type="journal article" date="2017" name="Plant J.">
        <title>Araport11: a complete reannotation of the Arabidopsis thaliana reference genome.</title>
        <authorList>
            <person name="Cheng C.Y."/>
            <person name="Krishnakumar V."/>
            <person name="Chan A.P."/>
            <person name="Thibaud-Nissen F."/>
            <person name="Schobel S."/>
            <person name="Town C.D."/>
        </authorList>
    </citation>
    <scope>GENOME REANNOTATION</scope>
    <source>
        <strain>cv. Columbia</strain>
    </source>
</reference>
<reference key="3">
    <citation type="journal article" date="2008" name="Trends Plant Sci.">
        <title>The plant B3 superfamily.</title>
        <authorList>
            <person name="Swaminathan K."/>
            <person name="Peterson K."/>
            <person name="Jack T."/>
        </authorList>
    </citation>
    <scope>GENE FAMILY</scope>
</reference>
<feature type="chain" id="PRO_0000375147" description="Putative B3 domain-containing protein At4g03160">
    <location>
        <begin position="1"/>
        <end position="192"/>
    </location>
</feature>
<feature type="DNA-binding region" description="TF-B3">
    <location>
        <begin position="75"/>
        <end position="173"/>
    </location>
</feature>
<feature type="region of interest" description="Disordered" evidence="2">
    <location>
        <begin position="22"/>
        <end position="44"/>
    </location>
</feature>
<feature type="compositionally biased region" description="Acidic residues" evidence="2">
    <location>
        <begin position="25"/>
        <end position="44"/>
    </location>
</feature>
<comment type="subcellular location">
    <subcellularLocation>
        <location evidence="1">Nucleus</location>
    </subcellularLocation>
</comment>
<organism>
    <name type="scientific">Arabidopsis thaliana</name>
    <name type="common">Mouse-ear cress</name>
    <dbReference type="NCBI Taxonomy" id="3702"/>
    <lineage>
        <taxon>Eukaryota</taxon>
        <taxon>Viridiplantae</taxon>
        <taxon>Streptophyta</taxon>
        <taxon>Embryophyta</taxon>
        <taxon>Tracheophyta</taxon>
        <taxon>Spermatophyta</taxon>
        <taxon>Magnoliopsida</taxon>
        <taxon>eudicotyledons</taxon>
        <taxon>Gunneridae</taxon>
        <taxon>Pentapetalae</taxon>
        <taxon>rosids</taxon>
        <taxon>malvids</taxon>
        <taxon>Brassicales</taxon>
        <taxon>Brassicaceae</taxon>
        <taxon>Camelineae</taxon>
        <taxon>Arabidopsis</taxon>
    </lineage>
</organism>
<name>Y4316_ARATH</name>
<sequence>MDDVTPDELEAVSVLLRLPNPVFFDQEEEEEDEEEEYDEESVCEDDLEVKSCMQTNENKGKKRKVAEQLMDSDVKDNQYRLMLGKEPVKKMMDALGKTEKLGTKGLNVSVYGPNGENHKMVLKIWIKGTPVLTSGWKNFVKSYKLEKHVDFLTIWMFRHKKTREICFAIDSTRFPVKGTLSKRILQEVFKNP</sequence>
<gene>
    <name type="ordered locus">At4g03160</name>
    <name type="ORF">F4C21.8</name>
</gene>
<accession>Q9ZR15</accession>
<protein>
    <recommendedName>
        <fullName>Putative B3 domain-containing protein At4g03160</fullName>
    </recommendedName>
</protein>
<dbReference type="EMBL" id="AC005275">
    <property type="protein sequence ID" value="AAD14444.1"/>
    <property type="molecule type" value="Genomic_DNA"/>
</dbReference>
<dbReference type="EMBL" id="AL161496">
    <property type="protein sequence ID" value="CAB77801.1"/>
    <property type="molecule type" value="Genomic_DNA"/>
</dbReference>
<dbReference type="EMBL" id="CP002687">
    <property type="protein sequence ID" value="AEE82282.1"/>
    <property type="molecule type" value="Genomic_DNA"/>
</dbReference>
<dbReference type="PIR" id="B85040">
    <property type="entry name" value="B85040"/>
</dbReference>
<dbReference type="RefSeq" id="NP_192225.1">
    <property type="nucleotide sequence ID" value="NM_116552.1"/>
</dbReference>
<dbReference type="SMR" id="Q9ZR15"/>
<dbReference type="PaxDb" id="3702-AT4G03160.1"/>
<dbReference type="EnsemblPlants" id="AT4G03160.1">
    <property type="protein sequence ID" value="AT4G03160.1"/>
    <property type="gene ID" value="AT4G03160"/>
</dbReference>
<dbReference type="GeneID" id="828054"/>
<dbReference type="Gramene" id="AT4G03160.1">
    <property type="protein sequence ID" value="AT4G03160.1"/>
    <property type="gene ID" value="AT4G03160"/>
</dbReference>
<dbReference type="KEGG" id="ath:AT4G03160"/>
<dbReference type="Araport" id="AT4G03160"/>
<dbReference type="TAIR" id="AT4G03160"/>
<dbReference type="eggNOG" id="ENOG502S91R">
    <property type="taxonomic scope" value="Eukaryota"/>
</dbReference>
<dbReference type="HOGENOM" id="CLU_100761_1_0_1"/>
<dbReference type="InParanoid" id="Q9ZR15"/>
<dbReference type="OMA" id="WRFVVEY"/>
<dbReference type="PhylomeDB" id="Q9ZR15"/>
<dbReference type="PRO" id="PR:Q9ZR15"/>
<dbReference type="Proteomes" id="UP000006548">
    <property type="component" value="Chromosome 4"/>
</dbReference>
<dbReference type="ExpressionAtlas" id="Q9ZR15">
    <property type="expression patterns" value="differential"/>
</dbReference>
<dbReference type="GO" id="GO:0005634">
    <property type="term" value="C:nucleus"/>
    <property type="evidence" value="ECO:0007669"/>
    <property type="project" value="UniProtKB-SubCell"/>
</dbReference>
<dbReference type="GO" id="GO:0003677">
    <property type="term" value="F:DNA binding"/>
    <property type="evidence" value="ECO:0007669"/>
    <property type="project" value="UniProtKB-KW"/>
</dbReference>
<dbReference type="CDD" id="cd10017">
    <property type="entry name" value="B3_DNA"/>
    <property type="match status" value="1"/>
</dbReference>
<dbReference type="Gene3D" id="2.40.330.10">
    <property type="entry name" value="DNA-binding pseudobarrel domain"/>
    <property type="match status" value="1"/>
</dbReference>
<dbReference type="InterPro" id="IPR005508">
    <property type="entry name" value="At2g31720-like"/>
</dbReference>
<dbReference type="InterPro" id="IPR003340">
    <property type="entry name" value="B3_DNA-bd"/>
</dbReference>
<dbReference type="InterPro" id="IPR015300">
    <property type="entry name" value="DNA-bd_pseudobarrel_sf"/>
</dbReference>
<dbReference type="PANTHER" id="PTHR31541">
    <property type="entry name" value="B3 DOMAIN PLANT PROTEIN-RELATED"/>
    <property type="match status" value="1"/>
</dbReference>
<dbReference type="PANTHER" id="PTHR31541:SF28">
    <property type="entry name" value="TF-B3 DOMAIN-CONTAINING PROTEIN"/>
    <property type="match status" value="1"/>
</dbReference>
<dbReference type="SUPFAM" id="SSF101936">
    <property type="entry name" value="DNA-binding pseudobarrel domain"/>
    <property type="match status" value="1"/>
</dbReference>
<evidence type="ECO:0000250" key="1"/>
<evidence type="ECO:0000256" key="2">
    <source>
        <dbReference type="SAM" id="MobiDB-lite"/>
    </source>
</evidence>
<proteinExistence type="inferred from homology"/>
<keyword id="KW-0238">DNA-binding</keyword>
<keyword id="KW-0539">Nucleus</keyword>
<keyword id="KW-1185">Reference proteome</keyword>
<keyword id="KW-0804">Transcription</keyword>
<keyword id="KW-0805">Transcription regulation</keyword>